<dbReference type="EC" id="7.1.1.-" evidence="1"/>
<dbReference type="EMBL" id="AM233362">
    <property type="protein sequence ID" value="CAJ80268.1"/>
    <property type="molecule type" value="Genomic_DNA"/>
</dbReference>
<dbReference type="RefSeq" id="WP_003017394.1">
    <property type="nucleotide sequence ID" value="NZ_CP009694.1"/>
</dbReference>
<dbReference type="SMR" id="Q2A1F1"/>
<dbReference type="KEGG" id="ftl:FTL_1829"/>
<dbReference type="Proteomes" id="UP000001944">
    <property type="component" value="Chromosome"/>
</dbReference>
<dbReference type="GO" id="GO:0005886">
    <property type="term" value="C:plasma membrane"/>
    <property type="evidence" value="ECO:0007669"/>
    <property type="project" value="UniProtKB-SubCell"/>
</dbReference>
<dbReference type="GO" id="GO:0045271">
    <property type="term" value="C:respiratory chain complex I"/>
    <property type="evidence" value="ECO:0007669"/>
    <property type="project" value="TreeGrafter"/>
</dbReference>
<dbReference type="GO" id="GO:0051539">
    <property type="term" value="F:4 iron, 4 sulfur cluster binding"/>
    <property type="evidence" value="ECO:0007669"/>
    <property type="project" value="UniProtKB-KW"/>
</dbReference>
<dbReference type="GO" id="GO:0005506">
    <property type="term" value="F:iron ion binding"/>
    <property type="evidence" value="ECO:0007669"/>
    <property type="project" value="UniProtKB-UniRule"/>
</dbReference>
<dbReference type="GO" id="GO:0008137">
    <property type="term" value="F:NADH dehydrogenase (ubiquinone) activity"/>
    <property type="evidence" value="ECO:0007669"/>
    <property type="project" value="InterPro"/>
</dbReference>
<dbReference type="GO" id="GO:0050136">
    <property type="term" value="F:NADH:ubiquinone reductase (non-electrogenic) activity"/>
    <property type="evidence" value="ECO:0007669"/>
    <property type="project" value="UniProtKB-UniRule"/>
</dbReference>
<dbReference type="GO" id="GO:0048038">
    <property type="term" value="F:quinone binding"/>
    <property type="evidence" value="ECO:0007669"/>
    <property type="project" value="UniProtKB-KW"/>
</dbReference>
<dbReference type="GO" id="GO:0009060">
    <property type="term" value="P:aerobic respiration"/>
    <property type="evidence" value="ECO:0007669"/>
    <property type="project" value="TreeGrafter"/>
</dbReference>
<dbReference type="GO" id="GO:0015990">
    <property type="term" value="P:electron transport coupled proton transport"/>
    <property type="evidence" value="ECO:0007669"/>
    <property type="project" value="TreeGrafter"/>
</dbReference>
<dbReference type="FunFam" id="3.40.50.12280:FF:000001">
    <property type="entry name" value="NADH-quinone oxidoreductase subunit B 2"/>
    <property type="match status" value="1"/>
</dbReference>
<dbReference type="Gene3D" id="3.40.50.12280">
    <property type="match status" value="1"/>
</dbReference>
<dbReference type="HAMAP" id="MF_01356">
    <property type="entry name" value="NDH1_NuoB"/>
    <property type="match status" value="1"/>
</dbReference>
<dbReference type="InterPro" id="IPR006137">
    <property type="entry name" value="NADH_UbQ_OxRdtase-like_20kDa"/>
</dbReference>
<dbReference type="InterPro" id="IPR006138">
    <property type="entry name" value="NADH_UQ_OxRdtase_20Kd_su"/>
</dbReference>
<dbReference type="NCBIfam" id="TIGR01957">
    <property type="entry name" value="nuoB_fam"/>
    <property type="match status" value="1"/>
</dbReference>
<dbReference type="NCBIfam" id="NF005012">
    <property type="entry name" value="PRK06411.1"/>
    <property type="match status" value="1"/>
</dbReference>
<dbReference type="PANTHER" id="PTHR11995">
    <property type="entry name" value="NADH DEHYDROGENASE"/>
    <property type="match status" value="1"/>
</dbReference>
<dbReference type="PANTHER" id="PTHR11995:SF14">
    <property type="entry name" value="NADH DEHYDROGENASE [UBIQUINONE] IRON-SULFUR PROTEIN 7, MITOCHONDRIAL"/>
    <property type="match status" value="1"/>
</dbReference>
<dbReference type="Pfam" id="PF01058">
    <property type="entry name" value="Oxidored_q6"/>
    <property type="match status" value="1"/>
</dbReference>
<dbReference type="SUPFAM" id="SSF56770">
    <property type="entry name" value="HydA/Nqo6-like"/>
    <property type="match status" value="1"/>
</dbReference>
<dbReference type="PROSITE" id="PS01150">
    <property type="entry name" value="COMPLEX1_20K"/>
    <property type="match status" value="1"/>
</dbReference>
<organism>
    <name type="scientific">Francisella tularensis subsp. holarctica (strain LVS)</name>
    <dbReference type="NCBI Taxonomy" id="376619"/>
    <lineage>
        <taxon>Bacteria</taxon>
        <taxon>Pseudomonadati</taxon>
        <taxon>Pseudomonadota</taxon>
        <taxon>Gammaproteobacteria</taxon>
        <taxon>Thiotrichales</taxon>
        <taxon>Francisellaceae</taxon>
        <taxon>Francisella</taxon>
    </lineage>
</organism>
<comment type="function">
    <text evidence="1">NDH-1 shuttles electrons from NADH, via FMN and iron-sulfur (Fe-S) centers, to quinones in the respiratory chain. The immediate electron acceptor for the enzyme in this species is believed to be ubiquinone. Couples the redox reaction to proton translocation (for every two electrons transferred, four hydrogen ions are translocated across the cytoplasmic membrane), and thus conserves the redox energy in a proton gradient.</text>
</comment>
<comment type="catalytic activity">
    <reaction evidence="1">
        <text>a quinone + NADH + 5 H(+)(in) = a quinol + NAD(+) + 4 H(+)(out)</text>
        <dbReference type="Rhea" id="RHEA:57888"/>
        <dbReference type="ChEBI" id="CHEBI:15378"/>
        <dbReference type="ChEBI" id="CHEBI:24646"/>
        <dbReference type="ChEBI" id="CHEBI:57540"/>
        <dbReference type="ChEBI" id="CHEBI:57945"/>
        <dbReference type="ChEBI" id="CHEBI:132124"/>
    </reaction>
</comment>
<comment type="cofactor">
    <cofactor evidence="1">
        <name>[4Fe-4S] cluster</name>
        <dbReference type="ChEBI" id="CHEBI:49883"/>
    </cofactor>
    <text evidence="1">Binds 1 [4Fe-4S] cluster.</text>
</comment>
<comment type="subunit">
    <text evidence="1">NDH-1 is composed of 14 different subunits. Subunits NuoB, C, D, E, F, and G constitute the peripheral sector of the complex.</text>
</comment>
<comment type="subcellular location">
    <subcellularLocation>
        <location evidence="1">Cell inner membrane</location>
        <topology evidence="1">Peripheral membrane protein</topology>
        <orientation evidence="1">Cytoplasmic side</orientation>
    </subcellularLocation>
</comment>
<comment type="similarity">
    <text evidence="1">Belongs to the complex I 20 kDa subunit family.</text>
</comment>
<proteinExistence type="inferred from homology"/>
<sequence length="158" mass="17258">MGIGNENKGFITASADALINWVRTGSLWPVTTGLACCAVEMMHAGAARYDLDRFGIVFRPSPRQSDVLIVAGTLCNKMAPALRQVYDQMPDPKWVISMGSCANGGGYYHYSYSVVRGCDRIVPVDIYVPGCPPTAEALVYGIIQLQNKIIRKDTIARK</sequence>
<accession>Q2A1F1</accession>
<name>NUOB_FRATH</name>
<evidence type="ECO:0000255" key="1">
    <source>
        <dbReference type="HAMAP-Rule" id="MF_01356"/>
    </source>
</evidence>
<feature type="chain" id="PRO_0000376228" description="NADH-quinone oxidoreductase subunit B">
    <location>
        <begin position="1"/>
        <end position="158"/>
    </location>
</feature>
<feature type="binding site" evidence="1">
    <location>
        <position position="36"/>
    </location>
    <ligand>
        <name>[4Fe-4S] cluster</name>
        <dbReference type="ChEBI" id="CHEBI:49883"/>
    </ligand>
</feature>
<feature type="binding site" evidence="1">
    <location>
        <position position="37"/>
    </location>
    <ligand>
        <name>[4Fe-4S] cluster</name>
        <dbReference type="ChEBI" id="CHEBI:49883"/>
    </ligand>
</feature>
<feature type="binding site" evidence="1">
    <location>
        <position position="101"/>
    </location>
    <ligand>
        <name>[4Fe-4S] cluster</name>
        <dbReference type="ChEBI" id="CHEBI:49883"/>
    </ligand>
</feature>
<feature type="binding site" evidence="1">
    <location>
        <position position="131"/>
    </location>
    <ligand>
        <name>[4Fe-4S] cluster</name>
        <dbReference type="ChEBI" id="CHEBI:49883"/>
    </ligand>
</feature>
<gene>
    <name evidence="1" type="primary">nuoB</name>
    <name type="ordered locus">FTL_1829</name>
</gene>
<keyword id="KW-0004">4Fe-4S</keyword>
<keyword id="KW-0997">Cell inner membrane</keyword>
<keyword id="KW-1003">Cell membrane</keyword>
<keyword id="KW-0408">Iron</keyword>
<keyword id="KW-0411">Iron-sulfur</keyword>
<keyword id="KW-0472">Membrane</keyword>
<keyword id="KW-0479">Metal-binding</keyword>
<keyword id="KW-0520">NAD</keyword>
<keyword id="KW-0874">Quinone</keyword>
<keyword id="KW-1185">Reference proteome</keyword>
<keyword id="KW-1278">Translocase</keyword>
<keyword id="KW-0813">Transport</keyword>
<keyword id="KW-0830">Ubiquinone</keyword>
<protein>
    <recommendedName>
        <fullName evidence="1">NADH-quinone oxidoreductase subunit B</fullName>
        <ecNumber evidence="1">7.1.1.-</ecNumber>
    </recommendedName>
    <alternativeName>
        <fullName evidence="1">NADH dehydrogenase I subunit B</fullName>
    </alternativeName>
    <alternativeName>
        <fullName evidence="1">NDH-1 subunit B</fullName>
    </alternativeName>
</protein>
<reference key="1">
    <citation type="submission" date="2006-03" db="EMBL/GenBank/DDBJ databases">
        <title>Complete genome sequence of Francisella tularensis LVS (Live Vaccine Strain).</title>
        <authorList>
            <person name="Chain P."/>
            <person name="Larimer F."/>
            <person name="Land M."/>
            <person name="Stilwagen S."/>
            <person name="Larsson P."/>
            <person name="Bearden S."/>
            <person name="Chu M."/>
            <person name="Oyston P."/>
            <person name="Forsman M."/>
            <person name="Andersson S."/>
            <person name="Lindler L."/>
            <person name="Titball R."/>
            <person name="Garcia E."/>
        </authorList>
    </citation>
    <scope>NUCLEOTIDE SEQUENCE [LARGE SCALE GENOMIC DNA]</scope>
    <source>
        <strain>LVS</strain>
    </source>
</reference>